<feature type="chain" id="PRO_0000083776" description="3-isopropylmalate dehydrogenase">
    <location>
        <begin position="1"/>
        <end position="353"/>
    </location>
</feature>
<feature type="binding site" evidence="1">
    <location>
        <begin position="73"/>
        <end position="86"/>
    </location>
    <ligand>
        <name>NAD(+)</name>
        <dbReference type="ChEBI" id="CHEBI:57540"/>
    </ligand>
</feature>
<feature type="binding site" evidence="1">
    <location>
        <position position="93"/>
    </location>
    <ligand>
        <name>substrate</name>
    </ligand>
</feature>
<feature type="binding site" evidence="1">
    <location>
        <position position="103"/>
    </location>
    <ligand>
        <name>substrate</name>
    </ligand>
</feature>
<feature type="binding site" evidence="1">
    <location>
        <position position="131"/>
    </location>
    <ligand>
        <name>substrate</name>
    </ligand>
</feature>
<feature type="binding site" evidence="1">
    <location>
        <position position="220"/>
    </location>
    <ligand>
        <name>Mg(2+)</name>
        <dbReference type="ChEBI" id="CHEBI:18420"/>
    </ligand>
</feature>
<feature type="binding site" evidence="1">
    <location>
        <position position="220"/>
    </location>
    <ligand>
        <name>substrate</name>
    </ligand>
</feature>
<feature type="binding site" evidence="1">
    <location>
        <position position="244"/>
    </location>
    <ligand>
        <name>Mg(2+)</name>
        <dbReference type="ChEBI" id="CHEBI:18420"/>
    </ligand>
</feature>
<feature type="binding site" evidence="1">
    <location>
        <position position="248"/>
    </location>
    <ligand>
        <name>Mg(2+)</name>
        <dbReference type="ChEBI" id="CHEBI:18420"/>
    </ligand>
</feature>
<feature type="binding site" evidence="1">
    <location>
        <begin position="278"/>
        <end position="290"/>
    </location>
    <ligand>
        <name>NAD(+)</name>
        <dbReference type="ChEBI" id="CHEBI:57540"/>
    </ligand>
</feature>
<feature type="site" description="Important for catalysis" evidence="1">
    <location>
        <position position="138"/>
    </location>
</feature>
<feature type="site" description="Important for catalysis" evidence="1">
    <location>
        <position position="188"/>
    </location>
</feature>
<gene>
    <name evidence="1" type="primary">leuB</name>
    <name type="ordered locus">Tbd_1920</name>
</gene>
<organism>
    <name type="scientific">Thiobacillus denitrificans (strain ATCC 25259 / T1)</name>
    <dbReference type="NCBI Taxonomy" id="292415"/>
    <lineage>
        <taxon>Bacteria</taxon>
        <taxon>Pseudomonadati</taxon>
        <taxon>Pseudomonadota</taxon>
        <taxon>Betaproteobacteria</taxon>
        <taxon>Nitrosomonadales</taxon>
        <taxon>Thiobacillaceae</taxon>
        <taxon>Thiobacillus</taxon>
    </lineage>
</organism>
<protein>
    <recommendedName>
        <fullName evidence="1">3-isopropylmalate dehydrogenase</fullName>
        <ecNumber evidence="1">1.1.1.85</ecNumber>
    </recommendedName>
    <alternativeName>
        <fullName evidence="1">3-IPM-DH</fullName>
    </alternativeName>
    <alternativeName>
        <fullName evidence="1">Beta-IPM dehydrogenase</fullName>
        <shortName evidence="1">IMDH</shortName>
    </alternativeName>
</protein>
<dbReference type="EC" id="1.1.1.85" evidence="1"/>
<dbReference type="EMBL" id="CP000116">
    <property type="protein sequence ID" value="AAZ97873.1"/>
    <property type="molecule type" value="Genomic_DNA"/>
</dbReference>
<dbReference type="RefSeq" id="WP_011312432.1">
    <property type="nucleotide sequence ID" value="NC_007404.1"/>
</dbReference>
<dbReference type="SMR" id="Q3SHL3"/>
<dbReference type="STRING" id="292415.Tbd_1920"/>
<dbReference type="KEGG" id="tbd:Tbd_1920"/>
<dbReference type="eggNOG" id="COG0473">
    <property type="taxonomic scope" value="Bacteria"/>
</dbReference>
<dbReference type="HOGENOM" id="CLU_031953_0_3_4"/>
<dbReference type="OrthoDB" id="5289857at2"/>
<dbReference type="UniPathway" id="UPA00048">
    <property type="reaction ID" value="UER00072"/>
</dbReference>
<dbReference type="Proteomes" id="UP000008291">
    <property type="component" value="Chromosome"/>
</dbReference>
<dbReference type="GO" id="GO:0005829">
    <property type="term" value="C:cytosol"/>
    <property type="evidence" value="ECO:0007669"/>
    <property type="project" value="TreeGrafter"/>
</dbReference>
<dbReference type="GO" id="GO:0003862">
    <property type="term" value="F:3-isopropylmalate dehydrogenase activity"/>
    <property type="evidence" value="ECO:0007669"/>
    <property type="project" value="UniProtKB-UniRule"/>
</dbReference>
<dbReference type="GO" id="GO:0000287">
    <property type="term" value="F:magnesium ion binding"/>
    <property type="evidence" value="ECO:0007669"/>
    <property type="project" value="InterPro"/>
</dbReference>
<dbReference type="GO" id="GO:0051287">
    <property type="term" value="F:NAD binding"/>
    <property type="evidence" value="ECO:0007669"/>
    <property type="project" value="InterPro"/>
</dbReference>
<dbReference type="GO" id="GO:0009098">
    <property type="term" value="P:L-leucine biosynthetic process"/>
    <property type="evidence" value="ECO:0007669"/>
    <property type="project" value="UniProtKB-UniRule"/>
</dbReference>
<dbReference type="FunFam" id="3.40.718.10:FF:000028">
    <property type="entry name" value="3-isopropylmalate dehydrogenase"/>
    <property type="match status" value="1"/>
</dbReference>
<dbReference type="Gene3D" id="3.40.718.10">
    <property type="entry name" value="Isopropylmalate Dehydrogenase"/>
    <property type="match status" value="1"/>
</dbReference>
<dbReference type="HAMAP" id="MF_01033">
    <property type="entry name" value="LeuB_type1"/>
    <property type="match status" value="1"/>
</dbReference>
<dbReference type="InterPro" id="IPR019818">
    <property type="entry name" value="IsoCit/isopropylmalate_DH_CS"/>
</dbReference>
<dbReference type="InterPro" id="IPR024084">
    <property type="entry name" value="IsoPropMal-DH-like_dom"/>
</dbReference>
<dbReference type="InterPro" id="IPR004429">
    <property type="entry name" value="Isopropylmalate_DH"/>
</dbReference>
<dbReference type="NCBIfam" id="TIGR00169">
    <property type="entry name" value="leuB"/>
    <property type="match status" value="1"/>
</dbReference>
<dbReference type="PANTHER" id="PTHR42979">
    <property type="entry name" value="3-ISOPROPYLMALATE DEHYDROGENASE"/>
    <property type="match status" value="1"/>
</dbReference>
<dbReference type="PANTHER" id="PTHR42979:SF1">
    <property type="entry name" value="3-ISOPROPYLMALATE DEHYDROGENASE"/>
    <property type="match status" value="1"/>
</dbReference>
<dbReference type="Pfam" id="PF00180">
    <property type="entry name" value="Iso_dh"/>
    <property type="match status" value="1"/>
</dbReference>
<dbReference type="SMART" id="SM01329">
    <property type="entry name" value="Iso_dh"/>
    <property type="match status" value="1"/>
</dbReference>
<dbReference type="SUPFAM" id="SSF53659">
    <property type="entry name" value="Isocitrate/Isopropylmalate dehydrogenase-like"/>
    <property type="match status" value="1"/>
</dbReference>
<dbReference type="PROSITE" id="PS00470">
    <property type="entry name" value="IDH_IMDH"/>
    <property type="match status" value="1"/>
</dbReference>
<evidence type="ECO:0000255" key="1">
    <source>
        <dbReference type="HAMAP-Rule" id="MF_01033"/>
    </source>
</evidence>
<name>LEU3_THIDA</name>
<proteinExistence type="inferred from homology"/>
<sequence>MKIAVLPGDGIGPEIISQAVKVLEALKSEGAKIEMETAPIGGAGYDAAGDPLPEATLKLAREADAVLLGAVGGPQYDTLDRPLRPERGLLRIRKELNLFANLRPALLYPELASASSLKPEVVSGLDLMIVRELTGDVYFGQPRGIETRNGERVGFNTMLYSESEVRRVAHVAFGIAMKRGKKLCSVEKANVLECSELWKEIMIEVAKDYPEVELSHMYVDNAAMQLIRAPKQFDTIVTGNIFGDILSDAASMLSGSIGMLPSASLDEHNKGMYEPIHGSAPDIAGKNLANPLATILSVAMMYRYTFADLATADRIENAVKQVIAKGYRTGDIWTEGTQKVSCSEMGDAVVVAL</sequence>
<accession>Q3SHL3</accession>
<comment type="function">
    <text evidence="1">Catalyzes the oxidation of 3-carboxy-2-hydroxy-4-methylpentanoate (3-isopropylmalate) to 3-carboxy-4-methyl-2-oxopentanoate. The product decarboxylates to 4-methyl-2 oxopentanoate.</text>
</comment>
<comment type="catalytic activity">
    <reaction evidence="1">
        <text>(2R,3S)-3-isopropylmalate + NAD(+) = 4-methyl-2-oxopentanoate + CO2 + NADH</text>
        <dbReference type="Rhea" id="RHEA:32271"/>
        <dbReference type="ChEBI" id="CHEBI:16526"/>
        <dbReference type="ChEBI" id="CHEBI:17865"/>
        <dbReference type="ChEBI" id="CHEBI:35121"/>
        <dbReference type="ChEBI" id="CHEBI:57540"/>
        <dbReference type="ChEBI" id="CHEBI:57945"/>
        <dbReference type="EC" id="1.1.1.85"/>
    </reaction>
</comment>
<comment type="cofactor">
    <cofactor evidence="1">
        <name>Mg(2+)</name>
        <dbReference type="ChEBI" id="CHEBI:18420"/>
    </cofactor>
    <cofactor evidence="1">
        <name>Mn(2+)</name>
        <dbReference type="ChEBI" id="CHEBI:29035"/>
    </cofactor>
    <text evidence="1">Binds 1 Mg(2+) or Mn(2+) ion per subunit.</text>
</comment>
<comment type="pathway">
    <text evidence="1">Amino-acid biosynthesis; L-leucine biosynthesis; L-leucine from 3-methyl-2-oxobutanoate: step 3/4.</text>
</comment>
<comment type="subunit">
    <text evidence="1">Homodimer.</text>
</comment>
<comment type="subcellular location">
    <subcellularLocation>
        <location evidence="1">Cytoplasm</location>
    </subcellularLocation>
</comment>
<comment type="similarity">
    <text evidence="1">Belongs to the isocitrate and isopropylmalate dehydrogenases family. LeuB type 1 subfamily.</text>
</comment>
<reference key="1">
    <citation type="journal article" date="2006" name="J. Bacteriol.">
        <title>The genome sequence of the obligately chemolithoautotrophic, facultatively anaerobic bacterium Thiobacillus denitrificans.</title>
        <authorList>
            <person name="Beller H.R."/>
            <person name="Chain P.S."/>
            <person name="Letain T.E."/>
            <person name="Chakicherla A."/>
            <person name="Larimer F.W."/>
            <person name="Richardson P.M."/>
            <person name="Coleman M.A."/>
            <person name="Wood A.P."/>
            <person name="Kelly D.P."/>
        </authorList>
    </citation>
    <scope>NUCLEOTIDE SEQUENCE [LARGE SCALE GENOMIC DNA]</scope>
    <source>
        <strain>ATCC 25259 / T1</strain>
    </source>
</reference>
<keyword id="KW-0028">Amino-acid biosynthesis</keyword>
<keyword id="KW-0100">Branched-chain amino acid biosynthesis</keyword>
<keyword id="KW-0963">Cytoplasm</keyword>
<keyword id="KW-0432">Leucine biosynthesis</keyword>
<keyword id="KW-0460">Magnesium</keyword>
<keyword id="KW-0464">Manganese</keyword>
<keyword id="KW-0479">Metal-binding</keyword>
<keyword id="KW-0520">NAD</keyword>
<keyword id="KW-0560">Oxidoreductase</keyword>
<keyword id="KW-1185">Reference proteome</keyword>